<gene>
    <name evidence="4" type="ordered locus">VF_1172</name>
</gene>
<keyword id="KW-0029">Amino-acid transport</keyword>
<keyword id="KW-0997">Cell inner membrane</keyword>
<keyword id="KW-1003">Cell membrane</keyword>
<keyword id="KW-0472">Membrane</keyword>
<keyword id="KW-1185">Reference proteome</keyword>
<keyword id="KW-0812">Transmembrane</keyword>
<keyword id="KW-1133">Transmembrane helix</keyword>
<keyword id="KW-0813">Transport</keyword>
<protein>
    <recommendedName>
        <fullName evidence="3">Glutamine transporter 2</fullName>
    </recommendedName>
</protein>
<comment type="function">
    <text evidence="2">Seems to be involved in glutamine transport. Complements an E.coli glnP deletion mutant.</text>
</comment>
<comment type="subcellular location">
    <subcellularLocation>
        <location evidence="3">Cell inner membrane</location>
        <topology evidence="1">Multi-pass membrane protein</topology>
    </subcellularLocation>
</comment>
<comment type="similarity">
    <text evidence="3">Belongs to the amino acid/polyamine transporter 2 family.</text>
</comment>
<sequence length="388" mass="42367">MNFKLFGSALILSGTALGAGMLAIPMVLAQFGLFYSTLLMLIICAGTTYAALLLTEACSKTELAFGINTVANKTIGKGGQLVTNALFYLLLFCMLIAYILGAADLIKRIFSMMNVEMSIEFAQVAFTLFASAFVVCGTQIIDKLNRLLFFFMISMLVLTLIILIPGMTVENLSQVTNHDKGMLFDTSTILFTSFASMPVIPSLVAYNKEATKQQLRNMVILGSIIPLICYLVWLYAVVGNLTANEITHFSNISDLIQTFSAKNEYIEIILSIFTSLALLTSFLGVAMALYNQNKDMISHNKIVTYVCTFILPLLGAGLAADQFLSVLGYAGVILVFLAIFIPLAMVVTLRKKETEEVHQNLHIYTAEGGKLALGLTLLFGLLLLISQI</sequence>
<feature type="chain" id="PRO_0000440878" description="Glutamine transporter 2">
    <location>
        <begin position="1"/>
        <end position="388"/>
    </location>
</feature>
<feature type="transmembrane region" description="Helical" evidence="1">
    <location>
        <begin position="5"/>
        <end position="27"/>
    </location>
</feature>
<feature type="transmembrane region" description="Helical" evidence="1">
    <location>
        <begin position="31"/>
        <end position="53"/>
    </location>
</feature>
<feature type="transmembrane region" description="Helical" evidence="1">
    <location>
        <begin position="86"/>
        <end position="106"/>
    </location>
</feature>
<feature type="transmembrane region" description="Helical" evidence="1">
    <location>
        <begin position="121"/>
        <end position="141"/>
    </location>
</feature>
<feature type="transmembrane region" description="Helical" evidence="1">
    <location>
        <begin position="147"/>
        <end position="167"/>
    </location>
</feature>
<feature type="transmembrane region" description="Helical" evidence="1">
    <location>
        <begin position="186"/>
        <end position="206"/>
    </location>
</feature>
<feature type="transmembrane region" description="Helical" evidence="1">
    <location>
        <begin position="218"/>
        <end position="238"/>
    </location>
</feature>
<feature type="transmembrane region" description="Helical" evidence="1">
    <location>
        <begin position="268"/>
        <end position="288"/>
    </location>
</feature>
<feature type="transmembrane region" description="Helical" evidence="1">
    <location>
        <begin position="302"/>
        <end position="322"/>
    </location>
</feature>
<feature type="transmembrane region" description="Helical" evidence="1">
    <location>
        <begin position="326"/>
        <end position="346"/>
    </location>
</feature>
<feature type="transmembrane region" description="Helical" evidence="1">
    <location>
        <begin position="368"/>
        <end position="388"/>
    </location>
</feature>
<reference key="1">
    <citation type="journal article" date="2005" name="Proc. Natl. Acad. Sci. U.S.A.">
        <title>Complete genome sequence of Vibrio fischeri: a symbiotic bacterium with pathogenic congeners.</title>
        <authorList>
            <person name="Ruby E.G."/>
            <person name="Urbanowski M."/>
            <person name="Campbell J."/>
            <person name="Dunn A."/>
            <person name="Faini M."/>
            <person name="Gunsalus R."/>
            <person name="Lostroh P."/>
            <person name="Lupp C."/>
            <person name="McCann J."/>
            <person name="Millikan D."/>
            <person name="Schaefer A."/>
            <person name="Stabb E."/>
            <person name="Stevens A."/>
            <person name="Visick K."/>
            <person name="Whistler C."/>
            <person name="Greenberg E.P."/>
        </authorList>
    </citation>
    <scope>NUCLEOTIDE SEQUENCE [LARGE SCALE GENOMIC DNA]</scope>
    <source>
        <strain>ATCC 700601 / ES114</strain>
    </source>
</reference>
<reference key="2">
    <citation type="journal article" date="2017" name="J. Biol. Chem.">
        <title>Model-enabled gene search (MEGS) allows fast and direct discovery of enzymatic and transport gene functions in the marine bacterium Vibrio fischeri.</title>
        <authorList>
            <person name="Pan S."/>
            <person name="Nikolakakis K."/>
            <person name="Adamczyk P.A."/>
            <person name="Pan M."/>
            <person name="Ruby E.G."/>
            <person name="Reed J.L."/>
        </authorList>
    </citation>
    <scope>FUNCTION</scope>
    <source>
        <strain>ATCC 700601 / ES114</strain>
    </source>
</reference>
<organism>
    <name type="scientific">Aliivibrio fischeri (strain ATCC 700601 / ES114)</name>
    <name type="common">Vibrio fischeri</name>
    <dbReference type="NCBI Taxonomy" id="312309"/>
    <lineage>
        <taxon>Bacteria</taxon>
        <taxon>Pseudomonadati</taxon>
        <taxon>Pseudomonadota</taxon>
        <taxon>Gammaproteobacteria</taxon>
        <taxon>Vibrionales</taxon>
        <taxon>Vibrionaceae</taxon>
        <taxon>Aliivibrio</taxon>
    </lineage>
</organism>
<evidence type="ECO:0000255" key="1"/>
<evidence type="ECO:0000269" key="2">
    <source>
    </source>
</evidence>
<evidence type="ECO:0000305" key="3"/>
<evidence type="ECO:0000312" key="4">
    <source>
        <dbReference type="EMBL" id="AAW85667.1"/>
    </source>
</evidence>
<proteinExistence type="inferred from homology"/>
<accession>Q5E5M9</accession>
<name>GLNT2_ALIF1</name>
<dbReference type="EMBL" id="CP000020">
    <property type="protein sequence ID" value="AAW85667.1"/>
    <property type="molecule type" value="Genomic_DNA"/>
</dbReference>
<dbReference type="RefSeq" id="WP_011261794.1">
    <property type="nucleotide sequence ID" value="NC_006840.2"/>
</dbReference>
<dbReference type="RefSeq" id="YP_204555.1">
    <property type="nucleotide sequence ID" value="NC_006840.2"/>
</dbReference>
<dbReference type="SMR" id="Q5E5M9"/>
<dbReference type="STRING" id="312309.VF_1172"/>
<dbReference type="EnsemblBacteria" id="AAW85667">
    <property type="protein sequence ID" value="AAW85667"/>
    <property type="gene ID" value="VF_1172"/>
</dbReference>
<dbReference type="GeneID" id="54163843"/>
<dbReference type="KEGG" id="vfi:VF_1172"/>
<dbReference type="PATRIC" id="fig|312309.11.peg.1179"/>
<dbReference type="eggNOG" id="COG0814">
    <property type="taxonomic scope" value="Bacteria"/>
</dbReference>
<dbReference type="HOGENOM" id="CLU_038102_3_0_6"/>
<dbReference type="OrthoDB" id="18749at2"/>
<dbReference type="Proteomes" id="UP000000537">
    <property type="component" value="Chromosome I"/>
</dbReference>
<dbReference type="GO" id="GO:0005886">
    <property type="term" value="C:plasma membrane"/>
    <property type="evidence" value="ECO:0007669"/>
    <property type="project" value="UniProtKB-SubCell"/>
</dbReference>
<dbReference type="GO" id="GO:0015173">
    <property type="term" value="F:aromatic amino acid transmembrane transporter activity"/>
    <property type="evidence" value="ECO:0007669"/>
    <property type="project" value="InterPro"/>
</dbReference>
<dbReference type="GO" id="GO:0003333">
    <property type="term" value="P:amino acid transmembrane transport"/>
    <property type="evidence" value="ECO:0007669"/>
    <property type="project" value="InterPro"/>
</dbReference>
<dbReference type="Gene3D" id="1.20.1740.10">
    <property type="entry name" value="Amino acid/polyamine transporter I"/>
    <property type="match status" value="1"/>
</dbReference>
<dbReference type="InterPro" id="IPR018227">
    <property type="entry name" value="Amino_acid_transport_2"/>
</dbReference>
<dbReference type="InterPro" id="IPR013059">
    <property type="entry name" value="Trp_tyr_transpt"/>
</dbReference>
<dbReference type="PANTHER" id="PTHR46997">
    <property type="entry name" value="LOW AFFINITY TRYPTOPHAN PERMEASE-RELATED"/>
    <property type="match status" value="1"/>
</dbReference>
<dbReference type="PANTHER" id="PTHR46997:SF2">
    <property type="entry name" value="TYROSINE-SPECIFIC TRANSPORT SYSTEM"/>
    <property type="match status" value="1"/>
</dbReference>
<dbReference type="Pfam" id="PF03222">
    <property type="entry name" value="Trp_Tyr_perm"/>
    <property type="match status" value="1"/>
</dbReference>
<dbReference type="PRINTS" id="PR00166">
    <property type="entry name" value="AROAAPRMEASE"/>
</dbReference>